<organism>
    <name type="scientific">Mycoplasma pneumoniae (strain ATCC 29342 / M129 / Subtype 1)</name>
    <name type="common">Mycoplasmoides pneumoniae</name>
    <dbReference type="NCBI Taxonomy" id="272634"/>
    <lineage>
        <taxon>Bacteria</taxon>
        <taxon>Bacillati</taxon>
        <taxon>Mycoplasmatota</taxon>
        <taxon>Mycoplasmoidales</taxon>
        <taxon>Mycoplasmoidaceae</taxon>
        <taxon>Mycoplasmoides</taxon>
    </lineage>
</organism>
<feature type="chain" id="PRO_0000198044" description="Putative type I specificity subunit S.MpnORF89P">
    <location>
        <begin position="1"/>
        <end position="335"/>
    </location>
</feature>
<reference key="1">
    <citation type="journal article" date="1996" name="Nucleic Acids Res.">
        <title>Complete sequence analysis of the genome of the bacterium Mycoplasma pneumoniae.</title>
        <authorList>
            <person name="Himmelreich R."/>
            <person name="Hilbert H."/>
            <person name="Plagens H."/>
            <person name="Pirkl E."/>
            <person name="Li B.-C."/>
            <person name="Herrmann R."/>
        </authorList>
    </citation>
    <scope>NUCLEOTIDE SEQUENCE [LARGE SCALE GENOMIC DNA]</scope>
    <source>
        <strain>ATCC 29342 / M129 / Subtype 1</strain>
    </source>
</reference>
<reference key="2">
    <citation type="journal article" date="2003" name="Nucleic Acids Res.">
        <title>A nomenclature for restriction enzymes, DNA methyltransferases, homing endonucleases and their genes.</title>
        <authorList>
            <person name="Roberts R.J."/>
            <person name="Belfort M."/>
            <person name="Bestor T."/>
            <person name="Bhagwat A.S."/>
            <person name="Bickle T.A."/>
            <person name="Bitinaite J."/>
            <person name="Blumenthal R.M."/>
            <person name="Degtyarev S.K."/>
            <person name="Dryden D.T."/>
            <person name="Dybvig K."/>
            <person name="Firman K."/>
            <person name="Gromova E.S."/>
            <person name="Gumport R.I."/>
            <person name="Halford S.E."/>
            <person name="Hattman S."/>
            <person name="Heitman J."/>
            <person name="Hornby D.P."/>
            <person name="Janulaitis A."/>
            <person name="Jeltsch A."/>
            <person name="Josephsen J."/>
            <person name="Kiss A."/>
            <person name="Klaenhammer T.R."/>
            <person name="Kobayashi I."/>
            <person name="Kong H."/>
            <person name="Krueger D.H."/>
            <person name="Lacks S."/>
            <person name="Marinus M.G."/>
            <person name="Miyahara M."/>
            <person name="Morgan R.D."/>
            <person name="Murray N.E."/>
            <person name="Nagaraja V."/>
            <person name="Piekarowicz A."/>
            <person name="Pingoud A."/>
            <person name="Raleigh E."/>
            <person name="Rao D.N."/>
            <person name="Reich N."/>
            <person name="Repin V.E."/>
            <person name="Selker E.U."/>
            <person name="Shaw P.C."/>
            <person name="Stein D.C."/>
            <person name="Stoddard B.L."/>
            <person name="Szybalski W."/>
            <person name="Trautner T.A."/>
            <person name="Van Etten J.L."/>
            <person name="Vitor J.M."/>
            <person name="Wilson G.G."/>
            <person name="Xu S.Y."/>
        </authorList>
    </citation>
    <scope>NOMENCLATURE</scope>
</reference>
<proteinExistence type="inferred from homology"/>
<keyword id="KW-0238">DNA-binding</keyword>
<keyword id="KW-1185">Reference proteome</keyword>
<keyword id="KW-0680">Restriction system</keyword>
<gene>
    <name type="ordered locus">MPN_089</name>
    <name type="ORF">MP066</name>
    <name type="ORF">R02_orf335</name>
</gene>
<evidence type="ECO:0000250" key="1">
    <source>
        <dbReference type="UniProtKB" id="P05719"/>
    </source>
</evidence>
<evidence type="ECO:0000303" key="2">
    <source>
    </source>
</evidence>
<evidence type="ECO:0000305" key="3"/>
<evidence type="ECO:0000305" key="4">
    <source>
    </source>
</evidence>
<comment type="function">
    <text evidence="2 4">The specificity (S) subunit of a type I methyltransferase (MTase); this subunit dictates DNA sequence specificity. The single R subunit has multiple frameshifts and is probably not expressed.</text>
</comment>
<comment type="subunit">
    <text evidence="1">The methyltransferase is composed of M and S polypeptides.</text>
</comment>
<comment type="domain">
    <text evidence="1">Contains two DNA recognition domains, each specifying recognition of one of the two defined components of the target sequence.</text>
</comment>
<comment type="similarity">
    <text evidence="3">Belongs to the type-I restriction system S methylase family.</text>
</comment>
<protein>
    <recommendedName>
        <fullName evidence="2">Putative type I specificity subunit S.MpnORF89P</fullName>
        <shortName>S protein</shortName>
        <shortName evidence="2">S.MpnORF89P</shortName>
    </recommendedName>
    <alternativeName>
        <fullName>Putative type-1 specificity subunit MPN_089</fullName>
    </alternativeName>
    <alternativeName>
        <fullName>S.MpnORFAP</fullName>
    </alternativeName>
</protein>
<name>T1SA_MYCPN</name>
<dbReference type="EMBL" id="U00089">
    <property type="protein sequence ID" value="AAB95713.1"/>
    <property type="molecule type" value="Genomic_DNA"/>
</dbReference>
<dbReference type="PIR" id="S73392">
    <property type="entry name" value="S73392"/>
</dbReference>
<dbReference type="RefSeq" id="NP_109777.1">
    <property type="nucleotide sequence ID" value="NC_000912.1"/>
</dbReference>
<dbReference type="SMR" id="P75604"/>
<dbReference type="IntAct" id="P75604">
    <property type="interactions" value="3"/>
</dbReference>
<dbReference type="STRING" id="272634.MPN_089"/>
<dbReference type="REBASE" id="391273">
    <property type="entry name" value="S.Eco6193ORF160P"/>
</dbReference>
<dbReference type="REBASE" id="6708">
    <property type="entry name" value="S.MpnORF89P"/>
</dbReference>
<dbReference type="EnsemblBacteria" id="AAB95713">
    <property type="protein sequence ID" value="AAB95713"/>
    <property type="gene ID" value="MPN_089"/>
</dbReference>
<dbReference type="KEGG" id="mpn:MPN_089"/>
<dbReference type="PATRIC" id="fig|272634.6.peg.88"/>
<dbReference type="HOGENOM" id="CLU_021095_6_0_14"/>
<dbReference type="OrthoDB" id="9795776at2"/>
<dbReference type="BioCyc" id="MPNE272634:G1GJ3-143-MONOMER"/>
<dbReference type="PRO" id="PR:P75604"/>
<dbReference type="Proteomes" id="UP000000808">
    <property type="component" value="Chromosome"/>
</dbReference>
<dbReference type="GO" id="GO:0003677">
    <property type="term" value="F:DNA binding"/>
    <property type="evidence" value="ECO:0007669"/>
    <property type="project" value="UniProtKB-KW"/>
</dbReference>
<dbReference type="GO" id="GO:0009307">
    <property type="term" value="P:DNA restriction-modification system"/>
    <property type="evidence" value="ECO:0007669"/>
    <property type="project" value="UniProtKB-KW"/>
</dbReference>
<dbReference type="CDD" id="cd17255">
    <property type="entry name" value="RMtype1_S_Fco49512ORF2615P-TRD2-CR2_like"/>
    <property type="match status" value="1"/>
</dbReference>
<dbReference type="Gene3D" id="3.90.220.20">
    <property type="entry name" value="DNA methylase specificity domains"/>
    <property type="match status" value="2"/>
</dbReference>
<dbReference type="InterPro" id="IPR000055">
    <property type="entry name" value="Restrct_endonuc_typeI_TRD"/>
</dbReference>
<dbReference type="InterPro" id="IPR044946">
    <property type="entry name" value="Restrct_endonuc_typeI_TRD_sf"/>
</dbReference>
<dbReference type="InterPro" id="IPR051212">
    <property type="entry name" value="Type-I_RE_S_subunit"/>
</dbReference>
<dbReference type="PANTHER" id="PTHR43140:SF1">
    <property type="entry name" value="TYPE I RESTRICTION ENZYME ECOKI SPECIFICITY SUBUNIT"/>
    <property type="match status" value="1"/>
</dbReference>
<dbReference type="PANTHER" id="PTHR43140">
    <property type="entry name" value="TYPE-1 RESTRICTION ENZYME ECOKI SPECIFICITY PROTEIN"/>
    <property type="match status" value="1"/>
</dbReference>
<dbReference type="Pfam" id="PF01420">
    <property type="entry name" value="Methylase_S"/>
    <property type="match status" value="2"/>
</dbReference>
<dbReference type="SUPFAM" id="SSF116734">
    <property type="entry name" value="DNA methylase specificity domain"/>
    <property type="match status" value="2"/>
</dbReference>
<sequence>MGRIKTYDFDGEYVTWTTRWSYAGSIYYRNGKFSASSNCGILKVLNKEINPKFLAYALKKEAKKFVNTTSAIPILRTQKVVEIPIDFPPLQIQEKIATILDTFTELSAELSAELSAELSAELSAELRERKKQYAFYRDYLLNLKNWKEENKYYKLGEIAQKVLVGGEKPADFSKEKNEVYKYPILSNNSKAEEFLVYSKTFRVEEKSITVSARGTIGAVFYRDFAYLPAVSLICFVPKEEFDIRFLFHALRAIKFKKQGSATGQLTVAQFKEYGIHVPSLKKQKEIAAILDPLYSFFTDLNEGIPAEIELRKKQLDYYQNFLFNWVQNQKAASIL</sequence>
<accession>P75604</accession>